<sequence length="407" mass="44944">MRILAMTRAHNAGRTLAATLDSLAVFSDDIYVIDDRSTDDTAEILANHPAVTNVVRARPDLPPTPWLIPESAGLELLYRMADFCRPDWVMMVDADWLVETDIDLRAVLARTPDDIVALMCPMVSRWDDPEYPDLIPVMGTAEALRGPLWRWYPGLRAGGKLMHNPHWPANITDHGRIGQLPGVRLVHSGWSTLAERILRVEHYLRLDPDYRFNFGVAYDRSLLFGYALDEVDLLKADYRRRIRGDFDPLEPGGRLPIDREPRAIGRGYGPHAGGFHPGVDFATDPGTPVYAVASGAVSAIDEVDGLVSLTIARCELDVVYVFRPGDEGRLVLGDRIAAGAQLGTIGAQGESADGYLHFEVRTQDGHVNPVRYLANMGLRPWPPPGRLRAVSGSYPPATPCTITAEDR</sequence>
<proteinExistence type="inferred from homology"/>
<reference key="1">
    <citation type="journal article" date="2003" name="Proc. Natl. Acad. Sci. U.S.A.">
        <title>The complete genome sequence of Mycobacterium bovis.</title>
        <authorList>
            <person name="Garnier T."/>
            <person name="Eiglmeier K."/>
            <person name="Camus J.-C."/>
            <person name="Medina N."/>
            <person name="Mansoor H."/>
            <person name="Pryor M."/>
            <person name="Duthoy S."/>
            <person name="Grondin S."/>
            <person name="Lacroix C."/>
            <person name="Monsempe C."/>
            <person name="Simon S."/>
            <person name="Harris B."/>
            <person name="Atkin R."/>
            <person name="Doggett J."/>
            <person name="Mayes R."/>
            <person name="Keating L."/>
            <person name="Wheeler P.R."/>
            <person name="Parkhill J."/>
            <person name="Barrell B.G."/>
            <person name="Cole S.T."/>
            <person name="Gordon S.V."/>
            <person name="Hewinson R.G."/>
        </authorList>
    </citation>
    <scope>NUCLEOTIDE SEQUENCE [LARGE SCALE GENOMIC DNA]</scope>
    <source>
        <strain>ATCC BAA-935 / AF2122/97</strain>
    </source>
</reference>
<reference key="2">
    <citation type="journal article" date="2017" name="Genome Announc.">
        <title>Updated reference genome sequence and annotation of Mycobacterium bovis AF2122/97.</title>
        <authorList>
            <person name="Malone K.M."/>
            <person name="Farrell D."/>
            <person name="Stuber T.P."/>
            <person name="Schubert O.T."/>
            <person name="Aebersold R."/>
            <person name="Robbe-Austerman S."/>
            <person name="Gordon S.V."/>
        </authorList>
    </citation>
    <scope>NUCLEOTIDE SEQUENCE [LARGE SCALE GENOMIC DNA]</scope>
    <scope>GENOME REANNOTATION</scope>
    <source>
        <strain>ATCC BAA-935 / AF2122/97</strain>
    </source>
</reference>
<protein>
    <recommendedName>
        <fullName>Uncharacterized protein Mb3815c</fullName>
    </recommendedName>
</protein>
<keyword id="KW-1185">Reference proteome</keyword>
<keyword id="KW-0732">Signal</keyword>
<organism>
    <name type="scientific">Mycobacterium bovis (strain ATCC BAA-935 / AF2122/97)</name>
    <dbReference type="NCBI Taxonomy" id="233413"/>
    <lineage>
        <taxon>Bacteria</taxon>
        <taxon>Bacillati</taxon>
        <taxon>Actinomycetota</taxon>
        <taxon>Actinomycetes</taxon>
        <taxon>Mycobacteriales</taxon>
        <taxon>Mycobacteriaceae</taxon>
        <taxon>Mycobacterium</taxon>
        <taxon>Mycobacterium tuberculosis complex</taxon>
    </lineage>
</organism>
<accession>P0A5H2</accession>
<accession>A0A1R3Y595</accession>
<accession>P72052</accession>
<accession>X2BP78</accession>
<feature type="signal peptide" evidence="1">
    <location>
        <begin position="1"/>
        <end position="27"/>
    </location>
</feature>
<feature type="chain" id="PRO_0000014157" description="Uncharacterized protein Mb3815c">
    <location>
        <begin position="28"/>
        <end position="407"/>
    </location>
</feature>
<name>Y3815_MYCBO</name>
<evidence type="ECO:0000255" key="1"/>
<dbReference type="EMBL" id="LT708304">
    <property type="protein sequence ID" value="SIU02444.1"/>
    <property type="molecule type" value="Genomic_DNA"/>
</dbReference>
<dbReference type="RefSeq" id="NP_857452.1">
    <property type="nucleotide sequence ID" value="NC_002945.3"/>
</dbReference>
<dbReference type="RefSeq" id="WP_003420618.1">
    <property type="nucleotide sequence ID" value="NC_002945.4"/>
</dbReference>
<dbReference type="SMR" id="P0A5H2"/>
<dbReference type="KEGG" id="mbo:BQ2027_MB3815C"/>
<dbReference type="PATRIC" id="fig|233413.5.peg.4172"/>
<dbReference type="Proteomes" id="UP000001419">
    <property type="component" value="Chromosome"/>
</dbReference>
<dbReference type="GO" id="GO:0004222">
    <property type="term" value="F:metalloendopeptidase activity"/>
    <property type="evidence" value="ECO:0007669"/>
    <property type="project" value="TreeGrafter"/>
</dbReference>
<dbReference type="CDD" id="cd12797">
    <property type="entry name" value="M23_peptidase"/>
    <property type="match status" value="1"/>
</dbReference>
<dbReference type="Gene3D" id="2.70.70.10">
    <property type="entry name" value="Glucose Permease (Domain IIA)"/>
    <property type="match status" value="1"/>
</dbReference>
<dbReference type="Gene3D" id="3.90.550.10">
    <property type="entry name" value="Spore Coat Polysaccharide Biosynthesis Protein SpsA, Chain A"/>
    <property type="match status" value="1"/>
</dbReference>
<dbReference type="InterPro" id="IPR050570">
    <property type="entry name" value="Cell_wall_metabolism_enzyme"/>
</dbReference>
<dbReference type="InterPro" id="IPR011055">
    <property type="entry name" value="Dup_hybrid_motif"/>
</dbReference>
<dbReference type="InterPro" id="IPR029044">
    <property type="entry name" value="Nucleotide-diphossugar_trans"/>
</dbReference>
<dbReference type="InterPro" id="IPR016047">
    <property type="entry name" value="Peptidase_M23"/>
</dbReference>
<dbReference type="PANTHER" id="PTHR21666:SF289">
    <property type="entry name" value="L-ALA--D-GLU ENDOPEPTIDASE"/>
    <property type="match status" value="1"/>
</dbReference>
<dbReference type="PANTHER" id="PTHR21666">
    <property type="entry name" value="PEPTIDASE-RELATED"/>
    <property type="match status" value="1"/>
</dbReference>
<dbReference type="Pfam" id="PF13704">
    <property type="entry name" value="Glyco_tranf_2_4"/>
    <property type="match status" value="1"/>
</dbReference>
<dbReference type="Pfam" id="PF01551">
    <property type="entry name" value="Peptidase_M23"/>
    <property type="match status" value="1"/>
</dbReference>
<dbReference type="SUPFAM" id="SSF51261">
    <property type="entry name" value="Duplicated hybrid motif"/>
    <property type="match status" value="1"/>
</dbReference>
<dbReference type="SUPFAM" id="SSF53448">
    <property type="entry name" value="Nucleotide-diphospho-sugar transferases"/>
    <property type="match status" value="1"/>
</dbReference>
<gene>
    <name type="ordered locus">BQ2027_MB3815C</name>
</gene>